<protein>
    <recommendedName>
        <fullName>Cell division cycle 7-related protein kinase</fullName>
        <shortName>CDC7-related kinase</shortName>
        <shortName>HsCdc7</shortName>
        <shortName>huCdc7</shortName>
        <ecNumber evidence="8">2.7.11.1</ecNumber>
    </recommendedName>
</protein>
<evidence type="ECO:0000255" key="1">
    <source>
        <dbReference type="PROSITE-ProRule" id="PRU00159"/>
    </source>
</evidence>
<evidence type="ECO:0000255" key="2">
    <source>
        <dbReference type="PROSITE-ProRule" id="PRU10027"/>
    </source>
</evidence>
<evidence type="ECO:0000269" key="3">
    <source>
    </source>
</evidence>
<evidence type="ECO:0000269" key="4">
    <source>
    </source>
</evidence>
<evidence type="ECO:0000269" key="5">
    <source>
    </source>
</evidence>
<evidence type="ECO:0000269" key="6">
    <source>
    </source>
</evidence>
<evidence type="ECO:0000269" key="7">
    <source>
    </source>
</evidence>
<evidence type="ECO:0000269" key="8">
    <source>
    </source>
</evidence>
<evidence type="ECO:0000269" key="9">
    <source ref="4"/>
</evidence>
<evidence type="ECO:0000305" key="10"/>
<evidence type="ECO:0000305" key="11">
    <source>
    </source>
</evidence>
<evidence type="ECO:0000312" key="12">
    <source>
        <dbReference type="HGNC" id="HGNC:1745"/>
    </source>
</evidence>
<evidence type="ECO:0007744" key="13">
    <source>
    </source>
</evidence>
<evidence type="ECO:0007744" key="14">
    <source>
    </source>
</evidence>
<evidence type="ECO:0007744" key="15">
    <source>
    </source>
</evidence>
<evidence type="ECO:0007829" key="16">
    <source>
        <dbReference type="PDB" id="6YA6"/>
    </source>
</evidence>
<evidence type="ECO:0007829" key="17">
    <source>
        <dbReference type="PDB" id="6YA7"/>
    </source>
</evidence>
<evidence type="ECO:0007829" key="18">
    <source>
        <dbReference type="PDB" id="6YA8"/>
    </source>
</evidence>
<sequence>MEASLGIQMDEPMAFSPQRDRFQAEGSLKKNEQNFKLAGVKKDIEKLYEAVPQLSNVFKIEDKIGEGTFSSVYLATAQLQVGPEEKIALKHLIPTSHPIRIAAELQCLTVAGGQDNVMGVKYCFRKNDHVVIAMPYLEHESFLDILNSLSFQEVREYMLNLFKALKRIHQFGIVHRDVKPSNFLYNRRLKKYALVDFGLAQGTHDTKIELLKFVQSEAQQERCSQNKSHIITGNKIPLSGPVPKELDQQSTTKASVKRPYTNAQIQIKQGKDGKEGSVGLSVQRSVFGERNFNIHSSISHESPAVKLMKQSKTVDVLSRKLATKKKAISTKVMNSAVMRKTASSCPASLTCDCYATDKVCSICLSRRQQVAPRAGTPGFRAPEVLTKCPNQTTAIDMWSAGVIFLSLLSGRYPFYKASDDLTALAQIMTIRGSRETIQAAKTFGKSILCSKEVPAQDLRKLCERLRGMDSSTPKLTSDIQGHASHQPAISEKTDHKASCLVQTPPGQYSGNSFKKGDSNSCEHCFDEYNTNLEGWNEVPDEAYDLLDKLLDLNPASRITAEEALLHPFFKDMSL</sequence>
<feature type="chain" id="PRO_0000085763" description="Cell division cycle 7-related protein kinase">
    <location>
        <begin position="1"/>
        <end position="574"/>
    </location>
</feature>
<feature type="domain" description="Protein kinase" evidence="1">
    <location>
        <begin position="58"/>
        <end position="574"/>
    </location>
</feature>
<feature type="active site" description="Proton acceptor" evidence="1 2">
    <location>
        <position position="177"/>
    </location>
</feature>
<feature type="binding site" evidence="1">
    <location>
        <begin position="64"/>
        <end position="72"/>
    </location>
    <ligand>
        <name>ATP</name>
        <dbReference type="ChEBI" id="CHEBI:30616"/>
    </ligand>
</feature>
<feature type="binding site" evidence="1">
    <location>
        <position position="90"/>
    </location>
    <ligand>
        <name>ATP</name>
        <dbReference type="ChEBI" id="CHEBI:30616"/>
    </ligand>
</feature>
<feature type="modified residue" description="Phosphoserine" evidence="13 14">
    <location>
        <position position="27"/>
    </location>
</feature>
<feature type="modified residue" description="Phosphothreonine" evidence="14">
    <location>
        <position position="503"/>
    </location>
</feature>
<feature type="cross-link" description="Glycyl lysine isopeptide (Lys-Gly) (interchain with G-Cter in SUMO2)" evidence="15">
    <location>
        <position position="268"/>
    </location>
</feature>
<feature type="sequence variant" id="VAR_019255" description="In dbSNP:rs13447459." evidence="9">
    <original>Q</original>
    <variation>P</variation>
    <location>
        <position position="23"/>
    </location>
</feature>
<feature type="sequence variant" id="VAR_019256" description="In dbSNP:rs13447492." evidence="9">
    <original>I</original>
    <variation>V</variation>
    <location>
        <position position="99"/>
    </location>
</feature>
<feature type="sequence variant" id="VAR_019257" description="In dbSNP:rs13447493." evidence="9">
    <original>G</original>
    <variation>W</variation>
    <location>
        <position position="112"/>
    </location>
</feature>
<feature type="sequence variant" id="VAR_019258" description="In dbSNP:rs13447503." evidence="7 9">
    <original>F</original>
    <variation>L</variation>
    <location>
        <position position="162"/>
    </location>
</feature>
<feature type="sequence variant" id="VAR_040403" description="In dbSNP:rs34979509." evidence="7">
    <original>I</original>
    <variation>M</variation>
    <location>
        <position position="208"/>
    </location>
</feature>
<feature type="sequence variant" id="VAR_040404" description="In dbSNP:rs56327502." evidence="7">
    <original>E</original>
    <variation>D</variation>
    <location>
        <position position="209"/>
    </location>
</feature>
<feature type="sequence variant" id="VAR_019259" description="In dbSNP:rs13447539." evidence="7 9">
    <original>K</original>
    <variation>R</variation>
    <location>
        <position position="441"/>
    </location>
</feature>
<feature type="sequence variant" id="VAR_040405" description="In dbSNP:rs56381770." evidence="7">
    <original>T</original>
    <variation>I</variation>
    <location>
        <position position="472"/>
    </location>
</feature>
<feature type="sequence variant" id="VAR_040406" description="In dbSNP:rs35055915." evidence="7">
    <original>S</original>
    <variation>A</variation>
    <location>
        <position position="498"/>
    </location>
</feature>
<feature type="sequence conflict" description="In Ref. 3; AAB97512." evidence="10" ref="3">
    <original>L</original>
    <variation>V</variation>
    <location>
        <position position="89"/>
    </location>
</feature>
<feature type="helix" evidence="16">
    <location>
        <begin position="39"/>
        <end position="50"/>
    </location>
</feature>
<feature type="helix" evidence="16">
    <location>
        <begin position="52"/>
        <end position="56"/>
    </location>
</feature>
<feature type="strand" evidence="16">
    <location>
        <begin position="59"/>
        <end position="66"/>
    </location>
</feature>
<feature type="strand" evidence="16">
    <location>
        <begin position="68"/>
        <end position="79"/>
    </location>
</feature>
<feature type="strand" evidence="16">
    <location>
        <begin position="84"/>
        <end position="92"/>
    </location>
</feature>
<feature type="helix" evidence="16">
    <location>
        <begin position="98"/>
        <end position="110"/>
    </location>
</feature>
<feature type="strand" evidence="16">
    <location>
        <begin position="121"/>
        <end position="126"/>
    </location>
</feature>
<feature type="strand" evidence="16">
    <location>
        <begin position="129"/>
        <end position="135"/>
    </location>
</feature>
<feature type="helix" evidence="16">
    <location>
        <begin position="142"/>
        <end position="145"/>
    </location>
</feature>
<feature type="turn" evidence="17">
    <location>
        <begin position="146"/>
        <end position="148"/>
    </location>
</feature>
<feature type="helix" evidence="16">
    <location>
        <begin position="151"/>
        <end position="170"/>
    </location>
</feature>
<feature type="helix" evidence="16">
    <location>
        <begin position="180"/>
        <end position="182"/>
    </location>
</feature>
<feature type="strand" evidence="16">
    <location>
        <begin position="183"/>
        <end position="186"/>
    </location>
</feature>
<feature type="turn" evidence="16">
    <location>
        <begin position="187"/>
        <end position="190"/>
    </location>
</feature>
<feature type="strand" evidence="16">
    <location>
        <begin position="191"/>
        <end position="194"/>
    </location>
</feature>
<feature type="helix" evidence="16">
    <location>
        <begin position="209"/>
        <end position="213"/>
    </location>
</feature>
<feature type="strand" evidence="17">
    <location>
        <begin position="214"/>
        <end position="217"/>
    </location>
</feature>
<feature type="turn" evidence="16">
    <location>
        <begin position="352"/>
        <end position="355"/>
    </location>
</feature>
<feature type="strand" evidence="16">
    <location>
        <begin position="356"/>
        <end position="359"/>
    </location>
</feature>
<feature type="helix" evidence="16">
    <location>
        <begin position="361"/>
        <end position="364"/>
    </location>
</feature>
<feature type="helix" evidence="18">
    <location>
        <begin position="377"/>
        <end position="379"/>
    </location>
</feature>
<feature type="helix" evidence="16">
    <location>
        <begin position="382"/>
        <end position="385"/>
    </location>
</feature>
<feature type="helix" evidence="16">
    <location>
        <begin position="394"/>
        <end position="409"/>
    </location>
</feature>
<feature type="strand" evidence="16">
    <location>
        <begin position="412"/>
        <end position="414"/>
    </location>
</feature>
<feature type="helix" evidence="16">
    <location>
        <begin position="420"/>
        <end position="431"/>
    </location>
</feature>
<feature type="helix" evidence="16">
    <location>
        <begin position="433"/>
        <end position="442"/>
    </location>
</feature>
<feature type="strand" evidence="16">
    <location>
        <begin position="445"/>
        <end position="451"/>
    </location>
</feature>
<feature type="helix" evidence="16">
    <location>
        <begin position="458"/>
        <end position="466"/>
    </location>
</feature>
<feature type="helix" evidence="17">
    <location>
        <begin position="534"/>
        <end position="537"/>
    </location>
</feature>
<feature type="helix" evidence="16">
    <location>
        <begin position="540"/>
        <end position="549"/>
    </location>
</feature>
<feature type="turn" evidence="16">
    <location>
        <begin position="554"/>
        <end position="556"/>
    </location>
</feature>
<feature type="helix" evidence="16">
    <location>
        <begin position="560"/>
        <end position="563"/>
    </location>
</feature>
<feature type="helix" evidence="16">
    <location>
        <begin position="567"/>
        <end position="569"/>
    </location>
</feature>
<accession>O00311</accession>
<accession>D3DT31</accession>
<accession>O00558</accession>
<accession>Q5T5U5</accession>
<keyword id="KW-0002">3D-structure</keyword>
<keyword id="KW-0025">Alternative splicing</keyword>
<keyword id="KW-0067">ATP-binding</keyword>
<keyword id="KW-0131">Cell cycle</keyword>
<keyword id="KW-0132">Cell division</keyword>
<keyword id="KW-1017">Isopeptide bond</keyword>
<keyword id="KW-0418">Kinase</keyword>
<keyword id="KW-0460">Magnesium</keyword>
<keyword id="KW-0479">Metal-binding</keyword>
<keyword id="KW-0547">Nucleotide-binding</keyword>
<keyword id="KW-0539">Nucleus</keyword>
<keyword id="KW-0597">Phosphoprotein</keyword>
<keyword id="KW-1267">Proteomics identification</keyword>
<keyword id="KW-1185">Reference proteome</keyword>
<keyword id="KW-0723">Serine/threonine-protein kinase</keyword>
<keyword id="KW-0808">Transferase</keyword>
<keyword id="KW-0832">Ubl conjugation</keyword>
<name>CDC7_HUMAN</name>
<reference key="1">
    <citation type="journal article" date="1997" name="EMBO J.">
        <title>Human and Xenopus cDNAs encoding budding yeast Cdc7-related kinases: in vitro phosphorylation of MCM subunits by a putative human homologue of Cdc7.</title>
        <authorList>
            <person name="Sato N."/>
            <person name="Arai K."/>
            <person name="Masai H."/>
        </authorList>
    </citation>
    <scope>NUCLEOTIDE SEQUENCE [MRNA]</scope>
    <source>
        <tissue>Liver</tissue>
        <tissue>Testis</tissue>
    </source>
</reference>
<reference key="2">
    <citation type="journal article" date="1998" name="Gene">
        <title>A human homolog of the yeast CDC7 gene is overexpressed in some tumors and transformed cell lines.</title>
        <authorList>
            <person name="Hess G.F."/>
            <person name="Drong R.F."/>
            <person name="Weiland K.L."/>
            <person name="Slightom J.L."/>
            <person name="Sclafani R.A."/>
            <person name="Hollingsworth R.E."/>
        </authorList>
    </citation>
    <scope>NUCLEOTIDE SEQUENCE [MRNA]</scope>
</reference>
<reference key="3">
    <citation type="journal article" date="1997" name="Proc. Natl. Acad. Sci. U.S.A.">
        <title>Identification and characterization of a human protein kinase related to budding yeast Cdc7p.</title>
        <authorList>
            <person name="Jiang W."/>
            <person name="Hunter T."/>
        </authorList>
    </citation>
    <scope>NUCLEOTIDE SEQUENCE [MRNA]</scope>
    <scope>CHARACTERIZATION</scope>
</reference>
<reference key="4">
    <citation type="submission" date="2004-03" db="EMBL/GenBank/DDBJ databases">
        <authorList>
            <consortium name="NIEHS SNPs program"/>
        </authorList>
    </citation>
    <scope>NUCLEOTIDE SEQUENCE [GENOMIC DNA]</scope>
    <scope>VARIANTS PRO-23; VAL-99; TRP-112; LEU-162 AND ARG-441</scope>
</reference>
<reference key="5">
    <citation type="journal article" date="2006" name="Nature">
        <title>The DNA sequence and biological annotation of human chromosome 1.</title>
        <authorList>
            <person name="Gregory S.G."/>
            <person name="Barlow K.F."/>
            <person name="McLay K.E."/>
            <person name="Kaul R."/>
            <person name="Swarbreck D."/>
            <person name="Dunham A."/>
            <person name="Scott C.E."/>
            <person name="Howe K.L."/>
            <person name="Woodfine K."/>
            <person name="Spencer C.C.A."/>
            <person name="Jones M.C."/>
            <person name="Gillson C."/>
            <person name="Searle S."/>
            <person name="Zhou Y."/>
            <person name="Kokocinski F."/>
            <person name="McDonald L."/>
            <person name="Evans R."/>
            <person name="Phillips K."/>
            <person name="Atkinson A."/>
            <person name="Cooper R."/>
            <person name="Jones C."/>
            <person name="Hall R.E."/>
            <person name="Andrews T.D."/>
            <person name="Lloyd C."/>
            <person name="Ainscough R."/>
            <person name="Almeida J.P."/>
            <person name="Ambrose K.D."/>
            <person name="Anderson F."/>
            <person name="Andrew R.W."/>
            <person name="Ashwell R.I.S."/>
            <person name="Aubin K."/>
            <person name="Babbage A.K."/>
            <person name="Bagguley C.L."/>
            <person name="Bailey J."/>
            <person name="Beasley H."/>
            <person name="Bethel G."/>
            <person name="Bird C.P."/>
            <person name="Bray-Allen S."/>
            <person name="Brown J.Y."/>
            <person name="Brown A.J."/>
            <person name="Buckley D."/>
            <person name="Burton J."/>
            <person name="Bye J."/>
            <person name="Carder C."/>
            <person name="Chapman J.C."/>
            <person name="Clark S.Y."/>
            <person name="Clarke G."/>
            <person name="Clee C."/>
            <person name="Cobley V."/>
            <person name="Collier R.E."/>
            <person name="Corby N."/>
            <person name="Coville G.J."/>
            <person name="Davies J."/>
            <person name="Deadman R."/>
            <person name="Dunn M."/>
            <person name="Earthrowl M."/>
            <person name="Ellington A.G."/>
            <person name="Errington H."/>
            <person name="Frankish A."/>
            <person name="Frankland J."/>
            <person name="French L."/>
            <person name="Garner P."/>
            <person name="Garnett J."/>
            <person name="Gay L."/>
            <person name="Ghori M.R.J."/>
            <person name="Gibson R."/>
            <person name="Gilby L.M."/>
            <person name="Gillett W."/>
            <person name="Glithero R.J."/>
            <person name="Grafham D.V."/>
            <person name="Griffiths C."/>
            <person name="Griffiths-Jones S."/>
            <person name="Grocock R."/>
            <person name="Hammond S."/>
            <person name="Harrison E.S.I."/>
            <person name="Hart E."/>
            <person name="Haugen E."/>
            <person name="Heath P.D."/>
            <person name="Holmes S."/>
            <person name="Holt K."/>
            <person name="Howden P.J."/>
            <person name="Hunt A.R."/>
            <person name="Hunt S.E."/>
            <person name="Hunter G."/>
            <person name="Isherwood J."/>
            <person name="James R."/>
            <person name="Johnson C."/>
            <person name="Johnson D."/>
            <person name="Joy A."/>
            <person name="Kay M."/>
            <person name="Kershaw J.K."/>
            <person name="Kibukawa M."/>
            <person name="Kimberley A.M."/>
            <person name="King A."/>
            <person name="Knights A.J."/>
            <person name="Lad H."/>
            <person name="Laird G."/>
            <person name="Lawlor S."/>
            <person name="Leongamornlert D.A."/>
            <person name="Lloyd D.M."/>
            <person name="Loveland J."/>
            <person name="Lovell J."/>
            <person name="Lush M.J."/>
            <person name="Lyne R."/>
            <person name="Martin S."/>
            <person name="Mashreghi-Mohammadi M."/>
            <person name="Matthews L."/>
            <person name="Matthews N.S.W."/>
            <person name="McLaren S."/>
            <person name="Milne S."/>
            <person name="Mistry S."/>
            <person name="Moore M.J.F."/>
            <person name="Nickerson T."/>
            <person name="O'Dell C.N."/>
            <person name="Oliver K."/>
            <person name="Palmeiri A."/>
            <person name="Palmer S.A."/>
            <person name="Parker A."/>
            <person name="Patel D."/>
            <person name="Pearce A.V."/>
            <person name="Peck A.I."/>
            <person name="Pelan S."/>
            <person name="Phelps K."/>
            <person name="Phillimore B.J."/>
            <person name="Plumb R."/>
            <person name="Rajan J."/>
            <person name="Raymond C."/>
            <person name="Rouse G."/>
            <person name="Saenphimmachak C."/>
            <person name="Sehra H.K."/>
            <person name="Sheridan E."/>
            <person name="Shownkeen R."/>
            <person name="Sims S."/>
            <person name="Skuce C.D."/>
            <person name="Smith M."/>
            <person name="Steward C."/>
            <person name="Subramanian S."/>
            <person name="Sycamore N."/>
            <person name="Tracey A."/>
            <person name="Tromans A."/>
            <person name="Van Helmond Z."/>
            <person name="Wall M."/>
            <person name="Wallis J.M."/>
            <person name="White S."/>
            <person name="Whitehead S.L."/>
            <person name="Wilkinson J.E."/>
            <person name="Willey D.L."/>
            <person name="Williams H."/>
            <person name="Wilming L."/>
            <person name="Wray P.W."/>
            <person name="Wu Z."/>
            <person name="Coulson A."/>
            <person name="Vaudin M."/>
            <person name="Sulston J.E."/>
            <person name="Durbin R.M."/>
            <person name="Hubbard T."/>
            <person name="Wooster R."/>
            <person name="Dunham I."/>
            <person name="Carter N.P."/>
            <person name="McVean G."/>
            <person name="Ross M.T."/>
            <person name="Harrow J."/>
            <person name="Olson M.V."/>
            <person name="Beck S."/>
            <person name="Rogers J."/>
            <person name="Bentley D.R."/>
        </authorList>
    </citation>
    <scope>NUCLEOTIDE SEQUENCE [LARGE SCALE GENOMIC DNA]</scope>
</reference>
<reference key="6">
    <citation type="submission" date="2005-09" db="EMBL/GenBank/DDBJ databases">
        <authorList>
            <person name="Mural R.J."/>
            <person name="Istrail S."/>
            <person name="Sutton G.G."/>
            <person name="Florea L."/>
            <person name="Halpern A.L."/>
            <person name="Mobarry C.M."/>
            <person name="Lippert R."/>
            <person name="Walenz B."/>
            <person name="Shatkay H."/>
            <person name="Dew I."/>
            <person name="Miller J.R."/>
            <person name="Flanigan M.J."/>
            <person name="Edwards N.J."/>
            <person name="Bolanos R."/>
            <person name="Fasulo D."/>
            <person name="Halldorsson B.V."/>
            <person name="Hannenhalli S."/>
            <person name="Turner R."/>
            <person name="Yooseph S."/>
            <person name="Lu F."/>
            <person name="Nusskern D.R."/>
            <person name="Shue B.C."/>
            <person name="Zheng X.H."/>
            <person name="Zhong F."/>
            <person name="Delcher A.L."/>
            <person name="Huson D.H."/>
            <person name="Kravitz S.A."/>
            <person name="Mouchard L."/>
            <person name="Reinert K."/>
            <person name="Remington K.A."/>
            <person name="Clark A.G."/>
            <person name="Waterman M.S."/>
            <person name="Eichler E.E."/>
            <person name="Adams M.D."/>
            <person name="Hunkapiller M.W."/>
            <person name="Myers E.W."/>
            <person name="Venter J.C."/>
        </authorList>
    </citation>
    <scope>NUCLEOTIDE SEQUENCE [LARGE SCALE GENOMIC DNA]</scope>
</reference>
<reference key="7">
    <citation type="journal article" date="2004" name="Genome Res.">
        <title>The status, quality, and expansion of the NIH full-length cDNA project: the Mammalian Gene Collection (MGC).</title>
        <authorList>
            <consortium name="The MGC Project Team"/>
        </authorList>
    </citation>
    <scope>NUCLEOTIDE SEQUENCE [LARGE SCALE MRNA]</scope>
</reference>
<reference key="8">
    <citation type="journal article" date="1999" name="Mol. Cell. Biol.">
        <title>A novel growth- and cell cycle-regulated protein, ASK, activates human Cdc7-related kinase and is essential for G1/S transition in mammalian cells.</title>
        <authorList>
            <person name="Kumagai H."/>
            <person name="Sato N."/>
            <person name="Yamada M."/>
            <person name="Mahony D."/>
            <person name="Seghezzi W."/>
            <person name="Lees E."/>
            <person name="Arai K."/>
            <person name="Masai H."/>
        </authorList>
    </citation>
    <scope>INTERACTION WITH DBF4</scope>
</reference>
<reference key="9">
    <citation type="journal article" date="2002" name="EMBO J.">
        <title>Drf1, a novel regulatory subunit for human Cdc7 kinase.</title>
        <authorList>
            <person name="Montagnoli A."/>
            <person name="Bosotti R."/>
            <person name="Villa F."/>
            <person name="Rialland M."/>
            <person name="Brotherton D."/>
            <person name="Mercurio C."/>
            <person name="Berthelsen J."/>
            <person name="Santocanale C."/>
        </authorList>
    </citation>
    <scope>FUNCTION</scope>
    <scope>INTERACTION WITH DBF4B</scope>
</reference>
<reference key="10">
    <citation type="journal article" date="2005" name="J. Biol. Chem.">
        <title>A second human Dbf4/ASK-related protein, Drf1/ASKL1, is required for efficient progression of S and M phases.</title>
        <authorList>
            <person name="Yoshizawa-Sugata N."/>
            <person name="Ishii A."/>
            <person name="Taniyama C."/>
            <person name="Matsui E."/>
            <person name="Arai K."/>
            <person name="Masai H."/>
        </authorList>
    </citation>
    <scope>INTERACTION WITH DBF4B</scope>
</reference>
<reference key="11">
    <citation type="journal article" date="2007" name="J. Biol. Chem.">
        <title>Cdc7 is an active kinase in human cancer cells undergoing replication stress.</title>
        <authorList>
            <person name="Tenca P."/>
            <person name="Brotherton D."/>
            <person name="Montagnoli A."/>
            <person name="Rainoldi S."/>
            <person name="Albanese C."/>
            <person name="Santocanale C."/>
        </authorList>
    </citation>
    <scope>INTERACTION WITH DBF4 AND DBF4B</scope>
</reference>
<reference key="12">
    <citation type="journal article" date="2009" name="Anal. Chem.">
        <title>Lys-N and trypsin cover complementary parts of the phosphoproteome in a refined SCX-based approach.</title>
        <authorList>
            <person name="Gauci S."/>
            <person name="Helbig A.O."/>
            <person name="Slijper M."/>
            <person name="Krijgsveld J."/>
            <person name="Heck A.J."/>
            <person name="Mohammed S."/>
        </authorList>
    </citation>
    <scope>IDENTIFICATION BY MASS SPECTROMETRY [LARGE SCALE ANALYSIS]</scope>
</reference>
<reference key="13">
    <citation type="journal article" date="2009" name="Mol. Cell. Proteomics">
        <title>Large-scale proteomics analysis of the human kinome.</title>
        <authorList>
            <person name="Oppermann F.S."/>
            <person name="Gnad F."/>
            <person name="Olsen J.V."/>
            <person name="Hornberger R."/>
            <person name="Greff Z."/>
            <person name="Keri G."/>
            <person name="Mann M."/>
            <person name="Daub H."/>
        </authorList>
    </citation>
    <scope>PHOSPHORYLATION [LARGE SCALE ANALYSIS] AT SER-27</scope>
    <scope>IDENTIFICATION BY MASS SPECTROMETRY [LARGE SCALE ANALYSIS]</scope>
</reference>
<reference key="14">
    <citation type="journal article" date="2013" name="J. Proteome Res.">
        <title>Toward a comprehensive characterization of a human cancer cell phosphoproteome.</title>
        <authorList>
            <person name="Zhou H."/>
            <person name="Di Palma S."/>
            <person name="Preisinger C."/>
            <person name="Peng M."/>
            <person name="Polat A.N."/>
            <person name="Heck A.J."/>
            <person name="Mohammed S."/>
        </authorList>
    </citation>
    <scope>PHOSPHORYLATION [LARGE SCALE ANALYSIS] AT SER-27 AND THR-503</scope>
    <scope>IDENTIFICATION BY MASS SPECTROMETRY [LARGE SCALE ANALYSIS]</scope>
    <source>
        <tissue>Erythroleukemia</tissue>
    </source>
</reference>
<reference key="15">
    <citation type="journal article" date="2017" name="Nat. Struct. Mol. Biol.">
        <title>Site-specific mapping of the human SUMO proteome reveals co-modification with phosphorylation.</title>
        <authorList>
            <person name="Hendriks I.A."/>
            <person name="Lyon D."/>
            <person name="Young C."/>
            <person name="Jensen L.J."/>
            <person name="Vertegaal A.C."/>
            <person name="Nielsen M.L."/>
        </authorList>
    </citation>
    <scope>SUMOYLATION [LARGE SCALE ANALYSIS] AT LYS-268</scope>
    <scope>IDENTIFICATION BY MASS SPECTROMETRY [LARGE SCALE ANALYSIS]</scope>
</reference>
<reference key="16">
    <citation type="journal article" date="2016" name="Nat. Commun.">
        <title>Claspin recruits Cdc7 kinase for initiation of DNA replication in human cells.</title>
        <authorList>
            <person name="Yang C.C."/>
            <person name="Suzuki M."/>
            <person name="Yamakawa S."/>
            <person name="Uno S."/>
            <person name="Ishii A."/>
            <person name="Yamazaki S."/>
            <person name="Fukatsu R."/>
            <person name="Fujisawa R."/>
            <person name="Sakimura K."/>
            <person name="Tsurimoto T."/>
            <person name="Masai H."/>
        </authorList>
    </citation>
    <scope>FUNCTION</scope>
    <scope>INTERACTION WITH CLASPIN</scope>
    <scope>CATALYTIC ACTIVITY</scope>
    <scope>SUBCELLULAR LOCATION</scope>
</reference>
<reference key="17">
    <citation type="journal article" date="2007" name="Nature">
        <title>Patterns of somatic mutation in human cancer genomes.</title>
        <authorList>
            <person name="Greenman C."/>
            <person name="Stephens P."/>
            <person name="Smith R."/>
            <person name="Dalgliesh G.L."/>
            <person name="Hunter C."/>
            <person name="Bignell G."/>
            <person name="Davies H."/>
            <person name="Teague J."/>
            <person name="Butler A."/>
            <person name="Stevens C."/>
            <person name="Edkins S."/>
            <person name="O'Meara S."/>
            <person name="Vastrik I."/>
            <person name="Schmidt E.E."/>
            <person name="Avis T."/>
            <person name="Barthorpe S."/>
            <person name="Bhamra G."/>
            <person name="Buck G."/>
            <person name="Choudhury B."/>
            <person name="Clements J."/>
            <person name="Cole J."/>
            <person name="Dicks E."/>
            <person name="Forbes S."/>
            <person name="Gray K."/>
            <person name="Halliday K."/>
            <person name="Harrison R."/>
            <person name="Hills K."/>
            <person name="Hinton J."/>
            <person name="Jenkinson A."/>
            <person name="Jones D."/>
            <person name="Menzies A."/>
            <person name="Mironenko T."/>
            <person name="Perry J."/>
            <person name="Raine K."/>
            <person name="Richardson D."/>
            <person name="Shepherd R."/>
            <person name="Small A."/>
            <person name="Tofts C."/>
            <person name="Varian J."/>
            <person name="Webb T."/>
            <person name="West S."/>
            <person name="Widaa S."/>
            <person name="Yates A."/>
            <person name="Cahill D.P."/>
            <person name="Louis D.N."/>
            <person name="Goldstraw P."/>
            <person name="Nicholson A.G."/>
            <person name="Brasseur F."/>
            <person name="Looijenga L."/>
            <person name="Weber B.L."/>
            <person name="Chiew Y.-E."/>
            <person name="DeFazio A."/>
            <person name="Greaves M.F."/>
            <person name="Green A.R."/>
            <person name="Campbell P."/>
            <person name="Birney E."/>
            <person name="Easton D.F."/>
            <person name="Chenevix-Trench G."/>
            <person name="Tan M.-H."/>
            <person name="Khoo S.K."/>
            <person name="Teh B.T."/>
            <person name="Yuen S.T."/>
            <person name="Leung S.Y."/>
            <person name="Wooster R."/>
            <person name="Futreal P.A."/>
            <person name="Stratton M.R."/>
        </authorList>
    </citation>
    <scope>VARIANTS [LARGE SCALE ANALYSIS] LEU-162; MET-208; ASP-209; ARG-441; ILE-472 AND ALA-498</scope>
</reference>
<organism>
    <name type="scientific">Homo sapiens</name>
    <name type="common">Human</name>
    <dbReference type="NCBI Taxonomy" id="9606"/>
    <lineage>
        <taxon>Eukaryota</taxon>
        <taxon>Metazoa</taxon>
        <taxon>Chordata</taxon>
        <taxon>Craniata</taxon>
        <taxon>Vertebrata</taxon>
        <taxon>Euteleostomi</taxon>
        <taxon>Mammalia</taxon>
        <taxon>Eutheria</taxon>
        <taxon>Euarchontoglires</taxon>
        <taxon>Primates</taxon>
        <taxon>Haplorrhini</taxon>
        <taxon>Catarrhini</taxon>
        <taxon>Hominidae</taxon>
        <taxon>Homo</taxon>
    </lineage>
</organism>
<proteinExistence type="evidence at protein level"/>
<gene>
    <name evidence="12" type="primary">CDC7</name>
    <name type="synonym">CDC7L1</name>
</gene>
<comment type="function">
    <text evidence="4 8">Kinase involved in initiation of DNA replication. Phosphorylates critical substrates that regulate the G1/S phase transition and initiation of DNA replication, such as MCM proteins and CLASPIN.</text>
</comment>
<comment type="catalytic activity">
    <reaction evidence="8">
        <text>L-seryl-[protein] + ATP = O-phospho-L-seryl-[protein] + ADP + H(+)</text>
        <dbReference type="Rhea" id="RHEA:17989"/>
        <dbReference type="Rhea" id="RHEA-COMP:9863"/>
        <dbReference type="Rhea" id="RHEA-COMP:11604"/>
        <dbReference type="ChEBI" id="CHEBI:15378"/>
        <dbReference type="ChEBI" id="CHEBI:29999"/>
        <dbReference type="ChEBI" id="CHEBI:30616"/>
        <dbReference type="ChEBI" id="CHEBI:83421"/>
        <dbReference type="ChEBI" id="CHEBI:456216"/>
        <dbReference type="EC" id="2.7.11.1"/>
    </reaction>
    <physiologicalReaction direction="left-to-right" evidence="8">
        <dbReference type="Rhea" id="RHEA:17990"/>
    </physiologicalReaction>
</comment>
<comment type="catalytic activity">
    <reaction evidence="8">
        <text>L-threonyl-[protein] + ATP = O-phospho-L-threonyl-[protein] + ADP + H(+)</text>
        <dbReference type="Rhea" id="RHEA:46608"/>
        <dbReference type="Rhea" id="RHEA-COMP:11060"/>
        <dbReference type="Rhea" id="RHEA-COMP:11605"/>
        <dbReference type="ChEBI" id="CHEBI:15378"/>
        <dbReference type="ChEBI" id="CHEBI:30013"/>
        <dbReference type="ChEBI" id="CHEBI:30616"/>
        <dbReference type="ChEBI" id="CHEBI:61977"/>
        <dbReference type="ChEBI" id="CHEBI:456216"/>
        <dbReference type="EC" id="2.7.11.1"/>
    </reaction>
    <physiologicalReaction direction="left-to-right" evidence="8">
        <dbReference type="Rhea" id="RHEA:46609"/>
    </physiologicalReaction>
</comment>
<comment type="cofactor">
    <cofactor>
        <name>Mg(2+)</name>
        <dbReference type="ChEBI" id="CHEBI:18420"/>
    </cofactor>
</comment>
<comment type="subunit">
    <text evidence="3 4 5 6 8">Forms a complex with either DBF4/DBF4A or DBF4B, leading to the activation of the kinase activity (PubMed:10373557, PubMed:12065429, PubMed:15668232, PubMed:17062569). Interacts with CLASPIN (via the acidic patch); the interaction is required for phosphorylation of MCM proteins and CLASPIN (PubMed:27401717).</text>
</comment>
<comment type="interaction">
    <interactant intactId="EBI-374980">
        <id>O00311</id>
    </interactant>
    <interactant intactId="EBI-11524452">
        <id>Q8N9N5-2</id>
        <label>BANP</label>
    </interactant>
    <organismsDiffer>false</organismsDiffer>
    <experiments>3</experiments>
</comment>
<comment type="interaction">
    <interactant intactId="EBI-374980">
        <id>O00311</id>
    </interactant>
    <interactant intactId="EBI-739580">
        <id>Q13137</id>
        <label>CALCOCO2</label>
    </interactant>
    <organismsDiffer>false</organismsDiffer>
    <experiments>3</experiments>
</comment>
<comment type="interaction">
    <interactant intactId="EBI-374980">
        <id>O00311</id>
    </interactant>
    <interactant intactId="EBI-372690">
        <id>Q9UBU7</id>
        <label>DBF4</label>
    </interactant>
    <organismsDiffer>false</organismsDiffer>
    <experiments>9</experiments>
</comment>
<comment type="interaction">
    <interactant intactId="EBI-374980">
        <id>O00311</id>
    </interactant>
    <interactant intactId="EBI-16017435">
        <id>Q9UBU7-1</id>
        <label>DBF4</label>
    </interactant>
    <organismsDiffer>false</organismsDiffer>
    <experiments>3</experiments>
</comment>
<comment type="interaction">
    <interactant intactId="EBI-374980">
        <id>O00311</id>
    </interactant>
    <interactant intactId="EBI-11022345">
        <id>P51114-2</id>
        <label>FXR1</label>
    </interactant>
    <organismsDiffer>false</organismsDiffer>
    <experiments>3</experiments>
</comment>
<comment type="interaction">
    <interactant intactId="EBI-374980">
        <id>O00311</id>
    </interactant>
    <interactant intactId="EBI-948296">
        <id>Q9UKD1</id>
        <label>GMEB2</label>
    </interactant>
    <organismsDiffer>false</organismsDiffer>
    <experiments>3</experiments>
</comment>
<comment type="interaction">
    <interactant intactId="EBI-374980">
        <id>O00311</id>
    </interactant>
    <interactant intactId="EBI-618309">
        <id>Q08379</id>
        <label>GOLGA2</label>
    </interactant>
    <organismsDiffer>false</organismsDiffer>
    <experiments>3</experiments>
</comment>
<comment type="interaction">
    <interactant intactId="EBI-374980">
        <id>O00311</id>
    </interactant>
    <interactant intactId="EBI-11163335">
        <id>Q9NYA3</id>
        <label>GOLGA6A</label>
    </interactant>
    <organismsDiffer>false</organismsDiffer>
    <experiments>3</experiments>
</comment>
<comment type="interaction">
    <interactant intactId="EBI-374980">
        <id>O00311</id>
    </interactant>
    <interactant intactId="EBI-2549423">
        <id>Q6NT76</id>
        <label>HMBOX1</label>
    </interactant>
    <organismsDiffer>false</organismsDiffer>
    <experiments>3</experiments>
</comment>
<comment type="interaction">
    <interactant intactId="EBI-374980">
        <id>O00311</id>
    </interactant>
    <interactant intactId="EBI-466029">
        <id>P42858</id>
        <label>HTT</label>
    </interactant>
    <organismsDiffer>false</organismsDiffer>
    <experiments>3</experiments>
</comment>
<comment type="interaction">
    <interactant intactId="EBI-374980">
        <id>O00311</id>
    </interactant>
    <interactant intactId="EBI-11522367">
        <id>Q13422-7</id>
        <label>IKZF1</label>
    </interactant>
    <organismsDiffer>false</organismsDiffer>
    <experiments>3</experiments>
</comment>
<comment type="interaction">
    <interactant intactId="EBI-374980">
        <id>O00311</id>
    </interactant>
    <interactant intactId="EBI-747204">
        <id>Q9UKT9</id>
        <label>IKZF3</label>
    </interactant>
    <organismsDiffer>false</organismsDiffer>
    <experiments>3</experiments>
</comment>
<comment type="interaction">
    <interactant intactId="EBI-374980">
        <id>O00311</id>
    </interactant>
    <interactant intactId="EBI-1640423">
        <id>Q9H2S9</id>
        <label>IKZF4</label>
    </interactant>
    <organismsDiffer>false</organismsDiffer>
    <experiments>3</experiments>
</comment>
<comment type="interaction">
    <interactant intactId="EBI-374980">
        <id>O00311</id>
    </interactant>
    <interactant intactId="EBI-1216080">
        <id>Q9Y250</id>
        <label>LZTS1</label>
    </interactant>
    <organismsDiffer>false</organismsDiffer>
    <experiments>3</experiments>
</comment>
<comment type="interaction">
    <interactant intactId="EBI-374980">
        <id>O00311</id>
    </interactant>
    <interactant intactId="EBI-749378">
        <id>Q9BTE3</id>
        <label>MCMBP</label>
    </interactant>
    <organismsDiffer>false</organismsDiffer>
    <experiments>2</experiments>
</comment>
<comment type="interaction">
    <interactant intactId="EBI-374980">
        <id>O00311</id>
    </interactant>
    <interactant intactId="EBI-16439278">
        <id>Q6FHY5</id>
        <label>MEOX2</label>
    </interactant>
    <organismsDiffer>false</organismsDiffer>
    <experiments>3</experiments>
</comment>
<comment type="interaction">
    <interactant intactId="EBI-374980">
        <id>O00311</id>
    </interactant>
    <interactant intactId="EBI-11522433">
        <id>Q5JR59-3</id>
        <label>MTUS2</label>
    </interactant>
    <organismsDiffer>false</organismsDiffer>
    <experiments>3</experiments>
</comment>
<comment type="interaction">
    <interactant intactId="EBI-374980">
        <id>O00311</id>
    </interactant>
    <interactant intactId="EBI-2822051">
        <id>Q14140</id>
        <label>SERTAD2</label>
    </interactant>
    <organismsDiffer>false</organismsDiffer>
    <experiments>3</experiments>
</comment>
<comment type="interaction">
    <interactant intactId="EBI-374980">
        <id>O00311</id>
    </interactant>
    <interactant intactId="EBI-373258">
        <id>O75886</id>
        <label>STAM2</label>
    </interactant>
    <organismsDiffer>false</organismsDiffer>
    <experiments>3</experiments>
</comment>
<comment type="interaction">
    <interactant intactId="EBI-374980">
        <id>O00311</id>
    </interactant>
    <interactant intactId="EBI-1045825">
        <id>P55061</id>
        <label>TMBIM6</label>
    </interactant>
    <organismsDiffer>false</organismsDiffer>
    <experiments>3</experiments>
</comment>
<comment type="interaction">
    <interactant intactId="EBI-374980">
        <id>O00311</id>
    </interactant>
    <interactant intactId="EBI-719493">
        <id>P14373</id>
        <label>TRIM27</label>
    </interactant>
    <organismsDiffer>false</organismsDiffer>
    <experiments>3</experiments>
</comment>
<comment type="interaction">
    <interactant intactId="EBI-374980">
        <id>O00311</id>
    </interactant>
    <interactant intactId="EBI-741602">
        <id>O94972</id>
        <label>TRIM37</label>
    </interactant>
    <organismsDiffer>false</organismsDiffer>
    <experiments>3</experiments>
</comment>
<comment type="interaction">
    <interactant intactId="EBI-374980">
        <id>O00311</id>
    </interactant>
    <interactant intactId="EBI-6872498">
        <id>Q2TAA8</id>
        <label>TSNAXIP1</label>
    </interactant>
    <organismsDiffer>false</organismsDiffer>
    <experiments>3</experiments>
</comment>
<comment type="interaction">
    <interactant intactId="EBI-374980">
        <id>O00311</id>
    </interactant>
    <interactant intactId="EBI-19697726">
        <id>P0CW01</id>
        <label>TSPY10</label>
    </interactant>
    <organismsDiffer>false</organismsDiffer>
    <experiments>3</experiments>
</comment>
<comment type="interaction">
    <interactant intactId="EBI-374980">
        <id>O00311</id>
    </interactant>
    <interactant intactId="EBI-12369705">
        <id>Q9Y6T4</id>
        <label>WUGSC:H_DJ0726N20.gs.b</label>
    </interactant>
    <organismsDiffer>false</organismsDiffer>
    <experiments>3</experiments>
</comment>
<comment type="interaction">
    <interactant intactId="EBI-374980">
        <id>O00311</id>
    </interactant>
    <interactant intactId="EBI-12017160">
        <id>Q96DT7-3</id>
        <label>ZBTB10</label>
    </interactant>
    <organismsDiffer>false</organismsDiffer>
    <experiments>3</experiments>
</comment>
<comment type="interaction">
    <interactant intactId="EBI-374980">
        <id>O00311</id>
    </interactant>
    <interactant intactId="EBI-3918996">
        <id>Q9HCK0</id>
        <label>ZBTB26</label>
    </interactant>
    <organismsDiffer>false</organismsDiffer>
    <experiments>3</experiments>
</comment>
<comment type="interaction">
    <interactant intactId="EBI-374980">
        <id>O00311</id>
    </interactant>
    <interactant intactId="EBI-17494306">
        <id>Q8NAP8</id>
        <label>ZBTB8B</label>
    </interactant>
    <organismsDiffer>false</organismsDiffer>
    <experiments>3</experiments>
</comment>
<comment type="subcellular location">
    <subcellularLocation>
        <location evidence="11">Nucleus</location>
    </subcellularLocation>
</comment>
<comment type="alternative products">
    <event type="alternative splicing"/>
    <isoform>
        <id>O00311-1</id>
        <name>1</name>
        <sequence type="displayed"/>
    </isoform>
    <text>A number of isoforms may be produced.</text>
</comment>
<comment type="similarity">
    <text evidence="1">Belongs to the protein kinase superfamily. Ser/Thr protein kinase family. CDC7 subfamily.</text>
</comment>
<dbReference type="EC" id="2.7.11.1" evidence="8"/>
<dbReference type="EMBL" id="AB003698">
    <property type="protein sequence ID" value="BAA19962.1"/>
    <property type="molecule type" value="mRNA"/>
</dbReference>
<dbReference type="EMBL" id="AF015592">
    <property type="protein sequence ID" value="AAC52080.1"/>
    <property type="molecule type" value="mRNA"/>
</dbReference>
<dbReference type="EMBL" id="AF005209">
    <property type="protein sequence ID" value="AAB97512.1"/>
    <property type="molecule type" value="mRNA"/>
</dbReference>
<dbReference type="EMBL" id="AY585721">
    <property type="protein sequence ID" value="AAS79323.1"/>
    <property type="molecule type" value="Genomic_DNA"/>
</dbReference>
<dbReference type="EMBL" id="AL355871">
    <property type="status" value="NOT_ANNOTATED_CDS"/>
    <property type="molecule type" value="Genomic_DNA"/>
</dbReference>
<dbReference type="EMBL" id="CH471097">
    <property type="protein sequence ID" value="EAW73114.1"/>
    <property type="molecule type" value="Genomic_DNA"/>
</dbReference>
<dbReference type="EMBL" id="CH471097">
    <property type="protein sequence ID" value="EAW73115.1"/>
    <property type="molecule type" value="Genomic_DNA"/>
</dbReference>
<dbReference type="EMBL" id="BC110526">
    <property type="protein sequence ID" value="AAI10527.1"/>
    <property type="molecule type" value="mRNA"/>
</dbReference>
<dbReference type="EMBL" id="BC110527">
    <property type="protein sequence ID" value="AAI10528.1"/>
    <property type="molecule type" value="mRNA"/>
</dbReference>
<dbReference type="EMBL" id="BC111044">
    <property type="protein sequence ID" value="AAI11045.1"/>
    <property type="molecule type" value="mRNA"/>
</dbReference>
<dbReference type="CCDS" id="CCDS734.1">
    <molecule id="O00311-1"/>
</dbReference>
<dbReference type="RefSeq" id="NP_001127891.1">
    <molecule id="O00311-1"/>
    <property type="nucleotide sequence ID" value="NM_001134419.2"/>
</dbReference>
<dbReference type="RefSeq" id="NP_001127892.1">
    <molecule id="O00311-1"/>
    <property type="nucleotide sequence ID" value="NM_001134420.2"/>
</dbReference>
<dbReference type="RefSeq" id="NP_003494.1">
    <molecule id="O00311-1"/>
    <property type="nucleotide sequence ID" value="NM_003503.4"/>
</dbReference>
<dbReference type="RefSeq" id="XP_005271298.1">
    <molecule id="O00311-1"/>
    <property type="nucleotide sequence ID" value="XM_005271241.3"/>
</dbReference>
<dbReference type="RefSeq" id="XP_024305858.1">
    <molecule id="O00311-1"/>
    <property type="nucleotide sequence ID" value="XM_024450090.2"/>
</dbReference>
<dbReference type="RefSeq" id="XP_047287315.1">
    <molecule id="O00311-1"/>
    <property type="nucleotide sequence ID" value="XM_047431359.1"/>
</dbReference>
<dbReference type="RefSeq" id="XP_054194913.1">
    <molecule id="O00311-1"/>
    <property type="nucleotide sequence ID" value="XM_054338938.1"/>
</dbReference>
<dbReference type="RefSeq" id="XP_054194914.1">
    <molecule id="O00311-1"/>
    <property type="nucleotide sequence ID" value="XM_054338939.1"/>
</dbReference>
<dbReference type="RefSeq" id="XP_054194915.1">
    <molecule id="O00311-1"/>
    <property type="nucleotide sequence ID" value="XM_054338940.1"/>
</dbReference>
<dbReference type="RefSeq" id="XP_054194916.1">
    <molecule id="O00311-1"/>
    <property type="nucleotide sequence ID" value="XM_054338941.1"/>
</dbReference>
<dbReference type="PDB" id="4F99">
    <property type="method" value="X-ray"/>
    <property type="resolution" value="2.33 A"/>
    <property type="chains" value="A=37-574"/>
</dbReference>
<dbReference type="PDB" id="4F9A">
    <property type="method" value="X-ray"/>
    <property type="resolution" value="2.17 A"/>
    <property type="chains" value="A/C=37-574"/>
</dbReference>
<dbReference type="PDB" id="4F9B">
    <property type="method" value="X-ray"/>
    <property type="resolution" value="2.50 A"/>
    <property type="chains" value="A/C=37-574"/>
</dbReference>
<dbReference type="PDB" id="4F9C">
    <property type="method" value="X-ray"/>
    <property type="resolution" value="2.08 A"/>
    <property type="chains" value="A=37-574"/>
</dbReference>
<dbReference type="PDB" id="5UWQ">
    <property type="method" value="X-ray"/>
    <property type="resolution" value="2.28 A"/>
    <property type="chains" value="D=456-473"/>
</dbReference>
<dbReference type="PDB" id="5UWR">
    <property type="method" value="X-ray"/>
    <property type="resolution" value="2.24 A"/>
    <property type="chains" value="D=456-478"/>
</dbReference>
<dbReference type="PDB" id="6YA6">
    <property type="method" value="X-ray"/>
    <property type="resolution" value="1.44 A"/>
    <property type="chains" value="A=37-467, A=534-574"/>
</dbReference>
<dbReference type="PDB" id="6YA7">
    <property type="method" value="X-ray"/>
    <property type="resolution" value="1.67 A"/>
    <property type="chains" value="A=37-466, A=534-574"/>
</dbReference>
<dbReference type="PDB" id="6YA8">
    <property type="method" value="X-ray"/>
    <property type="resolution" value="1.79 A"/>
    <property type="chains" value="A=37-467, A=534-574"/>
</dbReference>
<dbReference type="PDBsum" id="4F99"/>
<dbReference type="PDBsum" id="4F9A"/>
<dbReference type="PDBsum" id="4F9B"/>
<dbReference type="PDBsum" id="4F9C"/>
<dbReference type="PDBsum" id="5UWQ"/>
<dbReference type="PDBsum" id="5UWR"/>
<dbReference type="PDBsum" id="6YA6"/>
<dbReference type="PDBsum" id="6YA7"/>
<dbReference type="PDBsum" id="6YA8"/>
<dbReference type="SMR" id="O00311"/>
<dbReference type="BioGRID" id="113914">
    <property type="interactions" value="147"/>
</dbReference>
<dbReference type="CORUM" id="O00311"/>
<dbReference type="DIP" id="DIP-31728N"/>
<dbReference type="FunCoup" id="O00311">
    <property type="interactions" value="2419"/>
</dbReference>
<dbReference type="IntAct" id="O00311">
    <property type="interactions" value="84"/>
</dbReference>
<dbReference type="MINT" id="O00311"/>
<dbReference type="STRING" id="9606.ENSP00000393139"/>
<dbReference type="BindingDB" id="O00311"/>
<dbReference type="ChEMBL" id="CHEMBL5443"/>
<dbReference type="DrugBank" id="DB07149">
    <property type="generic name" value="(7S)-2-(2-aminopyrimidin-4-yl)-7-(2-fluoroethyl)-1,5,6,7-tetrahydro-4H-pyrrolo[3,2-c]pyridin-4-one"/>
</dbReference>
<dbReference type="DrugBank" id="DB12357">
    <property type="generic name" value="BMS-863233"/>
</dbReference>
<dbReference type="DrugBank" id="DB17043">
    <property type="generic name" value="PHA-767491"/>
</dbReference>
<dbReference type="DrugBank" id="DB16330">
    <property type="generic name" value="Simurosertib"/>
</dbReference>
<dbReference type="GuidetoPHARMACOLOGY" id="1960"/>
<dbReference type="GlyGen" id="O00311">
    <property type="glycosylation" value="2 sites, 1 O-linked glycan (1 site)"/>
</dbReference>
<dbReference type="iPTMnet" id="O00311"/>
<dbReference type="PhosphoSitePlus" id="O00311"/>
<dbReference type="SwissPalm" id="O00311"/>
<dbReference type="BioMuta" id="CDC7"/>
<dbReference type="jPOST" id="O00311"/>
<dbReference type="MassIVE" id="O00311"/>
<dbReference type="PaxDb" id="9606-ENSP00000393139"/>
<dbReference type="PeptideAtlas" id="O00311"/>
<dbReference type="ProteomicsDB" id="47836">
    <molecule id="O00311-1"/>
</dbReference>
<dbReference type="Pumba" id="O00311"/>
<dbReference type="Antibodypedia" id="3628">
    <property type="antibodies" value="314 antibodies from 36 providers"/>
</dbReference>
<dbReference type="DNASU" id="8317"/>
<dbReference type="Ensembl" id="ENST00000234626.11">
    <molecule id="O00311-1"/>
    <property type="protein sequence ID" value="ENSP00000234626.6"/>
    <property type="gene ID" value="ENSG00000097046.13"/>
</dbReference>
<dbReference type="Ensembl" id="ENST00000428239.5">
    <molecule id="O00311-1"/>
    <property type="protein sequence ID" value="ENSP00000393139.1"/>
    <property type="gene ID" value="ENSG00000097046.13"/>
</dbReference>
<dbReference type="GeneID" id="8317"/>
<dbReference type="KEGG" id="hsa:8317"/>
<dbReference type="MANE-Select" id="ENST00000234626.11">
    <property type="protein sequence ID" value="ENSP00000234626.6"/>
    <property type="RefSeq nucleotide sequence ID" value="NM_003503.4"/>
    <property type="RefSeq protein sequence ID" value="NP_003494.1"/>
</dbReference>
<dbReference type="UCSC" id="uc001doe.4">
    <molecule id="O00311-1"/>
    <property type="organism name" value="human"/>
</dbReference>
<dbReference type="AGR" id="HGNC:1745"/>
<dbReference type="CTD" id="8317"/>
<dbReference type="DisGeNET" id="8317"/>
<dbReference type="GeneCards" id="CDC7"/>
<dbReference type="HGNC" id="HGNC:1745">
    <property type="gene designation" value="CDC7"/>
</dbReference>
<dbReference type="HPA" id="ENSG00000097046">
    <property type="expression patterns" value="Tissue enhanced (testis)"/>
</dbReference>
<dbReference type="MIM" id="603311">
    <property type="type" value="gene"/>
</dbReference>
<dbReference type="neXtProt" id="NX_O00311"/>
<dbReference type="OpenTargets" id="ENSG00000097046"/>
<dbReference type="PharmGKB" id="PA26272"/>
<dbReference type="VEuPathDB" id="HostDB:ENSG00000097046"/>
<dbReference type="eggNOG" id="KOG1167">
    <property type="taxonomic scope" value="Eukaryota"/>
</dbReference>
<dbReference type="GeneTree" id="ENSGT00550000075011"/>
<dbReference type="HOGENOM" id="CLU_000288_118_1_1"/>
<dbReference type="InParanoid" id="O00311"/>
<dbReference type="OMA" id="CLRFRHR"/>
<dbReference type="OrthoDB" id="10020333at2759"/>
<dbReference type="PAN-GO" id="O00311">
    <property type="GO annotations" value="6 GO annotations based on evolutionary models"/>
</dbReference>
<dbReference type="PhylomeDB" id="O00311"/>
<dbReference type="TreeFam" id="TF101052"/>
<dbReference type="BRENDA" id="2.7.11.1">
    <property type="organism ID" value="2681"/>
</dbReference>
<dbReference type="PathwayCommons" id="O00311"/>
<dbReference type="Reactome" id="R-HSA-176187">
    <property type="pathway name" value="Activation of ATR in response to replication stress"/>
</dbReference>
<dbReference type="Reactome" id="R-HSA-68962">
    <property type="pathway name" value="Activation of the pre-replicative complex"/>
</dbReference>
<dbReference type="Reactome" id="R-HSA-8953750">
    <property type="pathway name" value="Transcriptional Regulation by E2F6"/>
</dbReference>
<dbReference type="SignaLink" id="O00311"/>
<dbReference type="SIGNOR" id="O00311"/>
<dbReference type="BioGRID-ORCS" id="8317">
    <property type="hits" value="847 hits in 1198 CRISPR screens"/>
</dbReference>
<dbReference type="ChiTaRS" id="CDC7">
    <property type="organism name" value="human"/>
</dbReference>
<dbReference type="EvolutionaryTrace" id="O00311"/>
<dbReference type="GeneWiki" id="Cell_division_cycle_7-related_protein_kinase"/>
<dbReference type="GenomeRNAi" id="8317"/>
<dbReference type="Pharos" id="O00311">
    <property type="development level" value="Tchem"/>
</dbReference>
<dbReference type="PRO" id="PR:O00311"/>
<dbReference type="Proteomes" id="UP000005640">
    <property type="component" value="Chromosome 1"/>
</dbReference>
<dbReference type="RNAct" id="O00311">
    <property type="molecule type" value="protein"/>
</dbReference>
<dbReference type="Bgee" id="ENSG00000097046">
    <property type="expression patterns" value="Expressed in secondary oocyte and 145 other cell types or tissues"/>
</dbReference>
<dbReference type="ExpressionAtlas" id="O00311">
    <property type="expression patterns" value="baseline and differential"/>
</dbReference>
<dbReference type="GO" id="GO:0005737">
    <property type="term" value="C:cytoplasm"/>
    <property type="evidence" value="ECO:0000314"/>
    <property type="project" value="HGNC-UCL"/>
</dbReference>
<dbReference type="GO" id="GO:0045171">
    <property type="term" value="C:intercellular bridge"/>
    <property type="evidence" value="ECO:0000314"/>
    <property type="project" value="HPA"/>
</dbReference>
<dbReference type="GO" id="GO:0072686">
    <property type="term" value="C:mitotic spindle"/>
    <property type="evidence" value="ECO:0000314"/>
    <property type="project" value="HPA"/>
</dbReference>
<dbReference type="GO" id="GO:0005654">
    <property type="term" value="C:nucleoplasm"/>
    <property type="evidence" value="ECO:0000314"/>
    <property type="project" value="HPA"/>
</dbReference>
<dbReference type="GO" id="GO:0005634">
    <property type="term" value="C:nucleus"/>
    <property type="evidence" value="ECO:0000314"/>
    <property type="project" value="HGNC-UCL"/>
</dbReference>
<dbReference type="GO" id="GO:0005524">
    <property type="term" value="F:ATP binding"/>
    <property type="evidence" value="ECO:0007669"/>
    <property type="project" value="UniProtKB-KW"/>
</dbReference>
<dbReference type="GO" id="GO:0016301">
    <property type="term" value="F:kinase activity"/>
    <property type="evidence" value="ECO:0000314"/>
    <property type="project" value="HGNC-UCL"/>
</dbReference>
<dbReference type="GO" id="GO:0046872">
    <property type="term" value="F:metal ion binding"/>
    <property type="evidence" value="ECO:0007669"/>
    <property type="project" value="UniProtKB-KW"/>
</dbReference>
<dbReference type="GO" id="GO:0004672">
    <property type="term" value="F:protein kinase activity"/>
    <property type="evidence" value="ECO:0000315"/>
    <property type="project" value="UniProtKB"/>
</dbReference>
<dbReference type="GO" id="GO:0106310">
    <property type="term" value="F:protein serine kinase activity"/>
    <property type="evidence" value="ECO:0007669"/>
    <property type="project" value="RHEA"/>
</dbReference>
<dbReference type="GO" id="GO:0004674">
    <property type="term" value="F:protein serine/threonine kinase activity"/>
    <property type="evidence" value="ECO:0000318"/>
    <property type="project" value="GO_Central"/>
</dbReference>
<dbReference type="GO" id="GO:0044770">
    <property type="term" value="P:cell cycle phase transition"/>
    <property type="evidence" value="ECO:0000315"/>
    <property type="project" value="BHF-UCL"/>
</dbReference>
<dbReference type="GO" id="GO:0051301">
    <property type="term" value="P:cell division"/>
    <property type="evidence" value="ECO:0007669"/>
    <property type="project" value="UniProtKB-KW"/>
</dbReference>
<dbReference type="GO" id="GO:0000727">
    <property type="term" value="P:double-strand break repair via break-induced replication"/>
    <property type="evidence" value="ECO:0000318"/>
    <property type="project" value="GO_Central"/>
</dbReference>
<dbReference type="GO" id="GO:0000082">
    <property type="term" value="P:G1/S transition of mitotic cell cycle"/>
    <property type="evidence" value="ECO:0000304"/>
    <property type="project" value="ProtInc"/>
</dbReference>
<dbReference type="GO" id="GO:0008284">
    <property type="term" value="P:positive regulation of cell population proliferation"/>
    <property type="evidence" value="ECO:0000315"/>
    <property type="project" value="HGNC-UCL"/>
</dbReference>
<dbReference type="GO" id="GO:0010971">
    <property type="term" value="P:positive regulation of G2/M transition of mitotic cell cycle"/>
    <property type="evidence" value="ECO:0000315"/>
    <property type="project" value="UniProtKB"/>
</dbReference>
<dbReference type="GO" id="GO:0010571">
    <property type="term" value="P:positive regulation of nuclear cell cycle DNA replication"/>
    <property type="evidence" value="ECO:0000315"/>
    <property type="project" value="UniProtKB"/>
</dbReference>
<dbReference type="GO" id="GO:0007165">
    <property type="term" value="P:signal transduction"/>
    <property type="evidence" value="ECO:0000318"/>
    <property type="project" value="GO_Central"/>
</dbReference>
<dbReference type="CDD" id="cd14019">
    <property type="entry name" value="STKc_Cdc7"/>
    <property type="match status" value="1"/>
</dbReference>
<dbReference type="FunFam" id="1.10.510.10:FF:000483">
    <property type="entry name" value="Cell division cycle 7-related protein kinase"/>
    <property type="match status" value="1"/>
</dbReference>
<dbReference type="FunFam" id="3.30.200.20:FF:000287">
    <property type="entry name" value="Cell division cycle 7-related protein kinase"/>
    <property type="match status" value="1"/>
</dbReference>
<dbReference type="Gene3D" id="3.30.200.20">
    <property type="entry name" value="Phosphorylase Kinase, domain 1"/>
    <property type="match status" value="1"/>
</dbReference>
<dbReference type="Gene3D" id="1.10.510.10">
    <property type="entry name" value="Transferase(Phosphotransferase) domain 1"/>
    <property type="match status" value="2"/>
</dbReference>
<dbReference type="InterPro" id="IPR011009">
    <property type="entry name" value="Kinase-like_dom_sf"/>
</dbReference>
<dbReference type="InterPro" id="IPR000719">
    <property type="entry name" value="Prot_kinase_dom"/>
</dbReference>
<dbReference type="InterPro" id="IPR017441">
    <property type="entry name" value="Protein_kinase_ATP_BS"/>
</dbReference>
<dbReference type="InterPro" id="IPR008271">
    <property type="entry name" value="Ser/Thr_kinase_AS"/>
</dbReference>
<dbReference type="PANTHER" id="PTHR44167:SF23">
    <property type="entry name" value="CDC7 KINASE, ISOFORM A-RELATED"/>
    <property type="match status" value="1"/>
</dbReference>
<dbReference type="PANTHER" id="PTHR44167">
    <property type="entry name" value="OVARIAN-SPECIFIC SERINE/THREONINE-PROTEIN KINASE LOK-RELATED"/>
    <property type="match status" value="1"/>
</dbReference>
<dbReference type="Pfam" id="PF00069">
    <property type="entry name" value="Pkinase"/>
    <property type="match status" value="2"/>
</dbReference>
<dbReference type="SMART" id="SM00220">
    <property type="entry name" value="S_TKc"/>
    <property type="match status" value="1"/>
</dbReference>
<dbReference type="SUPFAM" id="SSF56112">
    <property type="entry name" value="Protein kinase-like (PK-like)"/>
    <property type="match status" value="1"/>
</dbReference>
<dbReference type="PROSITE" id="PS00107">
    <property type="entry name" value="PROTEIN_KINASE_ATP"/>
    <property type="match status" value="1"/>
</dbReference>
<dbReference type="PROSITE" id="PS50011">
    <property type="entry name" value="PROTEIN_KINASE_DOM"/>
    <property type="match status" value="1"/>
</dbReference>
<dbReference type="PROSITE" id="PS00108">
    <property type="entry name" value="PROTEIN_KINASE_ST"/>
    <property type="match status" value="1"/>
</dbReference>